<dbReference type="EC" id="6.3.5.2" evidence="1"/>
<dbReference type="EMBL" id="DS231669">
    <property type="protein sequence ID" value="ESU17065.1"/>
    <property type="status" value="ALT_SEQ"/>
    <property type="molecule type" value="Genomic_DNA"/>
</dbReference>
<dbReference type="EMBL" id="HG970332">
    <property type="protein sequence ID" value="SCB64605.1"/>
    <property type="molecule type" value="Genomic_DNA"/>
</dbReference>
<dbReference type="RefSeq" id="XP_011319327.1">
    <property type="nucleotide sequence ID" value="XM_011321025.1"/>
</dbReference>
<dbReference type="SMR" id="Q4HXF0"/>
<dbReference type="FunCoup" id="Q4HXF0">
    <property type="interactions" value="1082"/>
</dbReference>
<dbReference type="STRING" id="229533.Q4HXF0"/>
<dbReference type="GeneID" id="23557267"/>
<dbReference type="KEGG" id="fgr:FGSG_10358"/>
<dbReference type="VEuPathDB" id="FungiDB:FGRAMPH1_01G07911"/>
<dbReference type="eggNOG" id="KOG1622">
    <property type="taxonomic scope" value="Eukaryota"/>
</dbReference>
<dbReference type="HOGENOM" id="CLU_014340_0_5_1"/>
<dbReference type="InParanoid" id="Q4HXF0"/>
<dbReference type="OrthoDB" id="27262at110618"/>
<dbReference type="UniPathway" id="UPA00189">
    <property type="reaction ID" value="UER00296"/>
</dbReference>
<dbReference type="Proteomes" id="UP000070720">
    <property type="component" value="Chromosome 1"/>
</dbReference>
<dbReference type="GO" id="GO:0005829">
    <property type="term" value="C:cytosol"/>
    <property type="evidence" value="ECO:0007669"/>
    <property type="project" value="UniProtKB-SubCell"/>
</dbReference>
<dbReference type="GO" id="GO:0005524">
    <property type="term" value="F:ATP binding"/>
    <property type="evidence" value="ECO:0007669"/>
    <property type="project" value="UniProtKB-KW"/>
</dbReference>
<dbReference type="GO" id="GO:0003922">
    <property type="term" value="F:GMP synthase (glutamine-hydrolyzing) activity"/>
    <property type="evidence" value="ECO:0000250"/>
    <property type="project" value="UniProtKB"/>
</dbReference>
<dbReference type="GO" id="GO:0003921">
    <property type="term" value="F:GMP synthase activity"/>
    <property type="evidence" value="ECO:0007669"/>
    <property type="project" value="InterPro"/>
</dbReference>
<dbReference type="GO" id="GO:0006177">
    <property type="term" value="P:GMP biosynthetic process"/>
    <property type="evidence" value="ECO:0000250"/>
    <property type="project" value="UniProtKB"/>
</dbReference>
<dbReference type="CDD" id="cd01742">
    <property type="entry name" value="GATase1_GMP_Synthase"/>
    <property type="match status" value="1"/>
</dbReference>
<dbReference type="CDD" id="cd01997">
    <property type="entry name" value="GMP_synthase_C"/>
    <property type="match status" value="1"/>
</dbReference>
<dbReference type="FunFam" id="3.30.300.10:FF:000002">
    <property type="entry name" value="GMP synthase [glutamine-hydrolyzing]"/>
    <property type="match status" value="1"/>
</dbReference>
<dbReference type="FunFam" id="3.40.50.880:FF:000001">
    <property type="entry name" value="GMP synthase [glutamine-hydrolyzing]"/>
    <property type="match status" value="1"/>
</dbReference>
<dbReference type="Gene3D" id="3.30.300.10">
    <property type="match status" value="1"/>
</dbReference>
<dbReference type="Gene3D" id="3.40.50.880">
    <property type="match status" value="1"/>
</dbReference>
<dbReference type="Gene3D" id="3.40.50.620">
    <property type="entry name" value="HUPs"/>
    <property type="match status" value="1"/>
</dbReference>
<dbReference type="HAMAP" id="MF_00344">
    <property type="entry name" value="GMP_synthase"/>
    <property type="match status" value="1"/>
</dbReference>
<dbReference type="InterPro" id="IPR029062">
    <property type="entry name" value="Class_I_gatase-like"/>
</dbReference>
<dbReference type="InterPro" id="IPR017926">
    <property type="entry name" value="GATASE"/>
</dbReference>
<dbReference type="InterPro" id="IPR001674">
    <property type="entry name" value="GMP_synth_C"/>
</dbReference>
<dbReference type="InterPro" id="IPR004739">
    <property type="entry name" value="GMP_synth_GATase"/>
</dbReference>
<dbReference type="InterPro" id="IPR022955">
    <property type="entry name" value="GMP_synthase"/>
</dbReference>
<dbReference type="InterPro" id="IPR025777">
    <property type="entry name" value="GMPS_ATP_PPase_dom"/>
</dbReference>
<dbReference type="InterPro" id="IPR022310">
    <property type="entry name" value="NAD/GMP_synthase"/>
</dbReference>
<dbReference type="InterPro" id="IPR014729">
    <property type="entry name" value="Rossmann-like_a/b/a_fold"/>
</dbReference>
<dbReference type="NCBIfam" id="TIGR00884">
    <property type="entry name" value="guaA_Cterm"/>
    <property type="match status" value="1"/>
</dbReference>
<dbReference type="NCBIfam" id="TIGR00888">
    <property type="entry name" value="guaA_Nterm"/>
    <property type="match status" value="1"/>
</dbReference>
<dbReference type="NCBIfam" id="NF000848">
    <property type="entry name" value="PRK00074.1"/>
    <property type="match status" value="1"/>
</dbReference>
<dbReference type="PANTHER" id="PTHR11922:SF2">
    <property type="entry name" value="GMP SYNTHASE [GLUTAMINE-HYDROLYZING]"/>
    <property type="match status" value="1"/>
</dbReference>
<dbReference type="PANTHER" id="PTHR11922">
    <property type="entry name" value="GMP SYNTHASE-RELATED"/>
    <property type="match status" value="1"/>
</dbReference>
<dbReference type="Pfam" id="PF00117">
    <property type="entry name" value="GATase"/>
    <property type="match status" value="1"/>
</dbReference>
<dbReference type="Pfam" id="PF00958">
    <property type="entry name" value="GMP_synt_C"/>
    <property type="match status" value="1"/>
</dbReference>
<dbReference type="Pfam" id="PF02540">
    <property type="entry name" value="NAD_synthase"/>
    <property type="match status" value="1"/>
</dbReference>
<dbReference type="PRINTS" id="PR00097">
    <property type="entry name" value="ANTSNTHASEII"/>
</dbReference>
<dbReference type="PRINTS" id="PR00096">
    <property type="entry name" value="GATASE"/>
</dbReference>
<dbReference type="SUPFAM" id="SSF52402">
    <property type="entry name" value="Adenine nucleotide alpha hydrolases-like"/>
    <property type="match status" value="1"/>
</dbReference>
<dbReference type="SUPFAM" id="SSF52317">
    <property type="entry name" value="Class I glutamine amidotransferase-like"/>
    <property type="match status" value="1"/>
</dbReference>
<dbReference type="SUPFAM" id="SSF54810">
    <property type="entry name" value="GMP synthetase C-terminal dimerisation domain"/>
    <property type="match status" value="1"/>
</dbReference>
<dbReference type="PROSITE" id="PS51273">
    <property type="entry name" value="GATASE_TYPE_1"/>
    <property type="match status" value="1"/>
</dbReference>
<dbReference type="PROSITE" id="PS51553">
    <property type="entry name" value="GMPS_ATP_PPASE"/>
    <property type="match status" value="1"/>
</dbReference>
<gene>
    <name type="primary">GUA1</name>
    <name type="ORF">FGRAMPH1_01T07911</name>
    <name type="ORF">FGRRES_17731</name>
    <name type="ORF">FGSG_10358</name>
</gene>
<protein>
    <recommendedName>
        <fullName>GMP synthase [glutamine-hydrolyzing]</fullName>
        <ecNumber evidence="1">6.3.5.2</ecNumber>
    </recommendedName>
    <alternativeName>
        <fullName>GMP synthetase</fullName>
    </alternativeName>
    <alternativeName>
        <fullName>Glutamine amidotransferase</fullName>
    </alternativeName>
</protein>
<feature type="chain" id="PRO_0000286150" description="GMP synthase [glutamine-hydrolyzing]">
    <location>
        <begin position="1"/>
        <end position="545"/>
    </location>
</feature>
<feature type="domain" description="Glutamine amidotransferase type-1" evidence="5">
    <location>
        <begin position="17"/>
        <end position="211"/>
    </location>
</feature>
<feature type="domain" description="GMPS ATP-PPase" evidence="6">
    <location>
        <begin position="212"/>
        <end position="420"/>
    </location>
</feature>
<feature type="active site" description="Nucleophile" evidence="5">
    <location>
        <position position="93"/>
    </location>
</feature>
<feature type="active site" evidence="5">
    <location>
        <position position="185"/>
    </location>
</feature>
<feature type="active site" evidence="5">
    <location>
        <position position="187"/>
    </location>
</feature>
<feature type="binding site" evidence="6">
    <location>
        <begin position="240"/>
        <end position="246"/>
    </location>
    <ligand>
        <name>ATP</name>
        <dbReference type="ChEBI" id="CHEBI:30616"/>
    </ligand>
</feature>
<feature type="binding site" evidence="2">
    <location>
        <position position="313"/>
    </location>
    <ligand>
        <name>XMP</name>
        <dbReference type="ChEBI" id="CHEBI:57464"/>
    </ligand>
</feature>
<feature type="binding site" evidence="2">
    <location>
        <position position="482"/>
    </location>
    <ligand>
        <name>XMP</name>
        <dbReference type="ChEBI" id="CHEBI:57464"/>
    </ligand>
</feature>
<feature type="binding site" evidence="2">
    <location>
        <position position="537"/>
    </location>
    <ligand>
        <name>XMP</name>
        <dbReference type="ChEBI" id="CHEBI:57464"/>
    </ligand>
</feature>
<feature type="binding site" evidence="2">
    <location>
        <position position="543"/>
    </location>
    <ligand>
        <name>XMP</name>
        <dbReference type="ChEBI" id="CHEBI:57464"/>
    </ligand>
</feature>
<feature type="sequence conflict" description="In Ref. 1; ESU17065." ref="1">
    <original>P</original>
    <variation>R</variation>
    <location>
        <position position="110"/>
    </location>
</feature>
<feature type="sequence conflict" description="In Ref. 1; ESU17065." ref="1">
    <original>N</original>
    <variation>I</variation>
    <location>
        <position position="142"/>
    </location>
</feature>
<proteinExistence type="inferred from homology"/>
<reference key="1">
    <citation type="journal article" date="2007" name="Science">
        <title>The Fusarium graminearum genome reveals a link between localized polymorphism and pathogen specialization.</title>
        <authorList>
            <person name="Cuomo C.A."/>
            <person name="Gueldener U."/>
            <person name="Xu J.-R."/>
            <person name="Trail F."/>
            <person name="Turgeon B.G."/>
            <person name="Di Pietro A."/>
            <person name="Walton J.D."/>
            <person name="Ma L.-J."/>
            <person name="Baker S.E."/>
            <person name="Rep M."/>
            <person name="Adam G."/>
            <person name="Antoniw J."/>
            <person name="Baldwin T."/>
            <person name="Calvo S.E."/>
            <person name="Chang Y.-L."/>
            <person name="DeCaprio D."/>
            <person name="Gale L.R."/>
            <person name="Gnerre S."/>
            <person name="Goswami R.S."/>
            <person name="Hammond-Kosack K."/>
            <person name="Harris L.J."/>
            <person name="Hilburn K."/>
            <person name="Kennell J.C."/>
            <person name="Kroken S."/>
            <person name="Magnuson J.K."/>
            <person name="Mannhaupt G."/>
            <person name="Mauceli E.W."/>
            <person name="Mewes H.-W."/>
            <person name="Mitterbauer R."/>
            <person name="Muehlbauer G."/>
            <person name="Muensterkoetter M."/>
            <person name="Nelson D."/>
            <person name="O'Donnell K."/>
            <person name="Ouellet T."/>
            <person name="Qi W."/>
            <person name="Quesneville H."/>
            <person name="Roncero M.I.G."/>
            <person name="Seong K.-Y."/>
            <person name="Tetko I.V."/>
            <person name="Urban M."/>
            <person name="Waalwijk C."/>
            <person name="Ward T.J."/>
            <person name="Yao J."/>
            <person name="Birren B.W."/>
            <person name="Kistler H.C."/>
        </authorList>
    </citation>
    <scope>NUCLEOTIDE SEQUENCE [LARGE SCALE GENOMIC DNA]</scope>
    <source>
        <strain>ATCC MYA-4620 / CBS 123657 / FGSC 9075 / NRRL 31084 / PH-1</strain>
    </source>
</reference>
<reference key="2">
    <citation type="journal article" date="2010" name="Nature">
        <title>Comparative genomics reveals mobile pathogenicity chromosomes in Fusarium.</title>
        <authorList>
            <person name="Ma L.-J."/>
            <person name="van der Does H.C."/>
            <person name="Borkovich K.A."/>
            <person name="Coleman J.J."/>
            <person name="Daboussi M.-J."/>
            <person name="Di Pietro A."/>
            <person name="Dufresne M."/>
            <person name="Freitag M."/>
            <person name="Grabherr M."/>
            <person name="Henrissat B."/>
            <person name="Houterman P.M."/>
            <person name="Kang S."/>
            <person name="Shim W.-B."/>
            <person name="Woloshuk C."/>
            <person name="Xie X."/>
            <person name="Xu J.-R."/>
            <person name="Antoniw J."/>
            <person name="Baker S.E."/>
            <person name="Bluhm B.H."/>
            <person name="Breakspear A."/>
            <person name="Brown D.W."/>
            <person name="Butchko R.A.E."/>
            <person name="Chapman S."/>
            <person name="Coulson R."/>
            <person name="Coutinho P.M."/>
            <person name="Danchin E.G.J."/>
            <person name="Diener A."/>
            <person name="Gale L.R."/>
            <person name="Gardiner D.M."/>
            <person name="Goff S."/>
            <person name="Hammond-Kosack K.E."/>
            <person name="Hilburn K."/>
            <person name="Hua-Van A."/>
            <person name="Jonkers W."/>
            <person name="Kazan K."/>
            <person name="Kodira C.D."/>
            <person name="Koehrsen M."/>
            <person name="Kumar L."/>
            <person name="Lee Y.-H."/>
            <person name="Li L."/>
            <person name="Manners J.M."/>
            <person name="Miranda-Saavedra D."/>
            <person name="Mukherjee M."/>
            <person name="Park G."/>
            <person name="Park J."/>
            <person name="Park S.-Y."/>
            <person name="Proctor R.H."/>
            <person name="Regev A."/>
            <person name="Ruiz-Roldan M.C."/>
            <person name="Sain D."/>
            <person name="Sakthikumar S."/>
            <person name="Sykes S."/>
            <person name="Schwartz D.C."/>
            <person name="Turgeon B.G."/>
            <person name="Wapinski I."/>
            <person name="Yoder O."/>
            <person name="Young S."/>
            <person name="Zeng Q."/>
            <person name="Zhou S."/>
            <person name="Galagan J."/>
            <person name="Cuomo C.A."/>
            <person name="Kistler H.C."/>
            <person name="Rep M."/>
        </authorList>
    </citation>
    <scope>GENOME REANNOTATION</scope>
    <source>
        <strain>ATCC MYA-4620 / CBS 123657 / FGSC 9075 / NRRL 31084 / PH-1</strain>
    </source>
</reference>
<reference key="3">
    <citation type="journal article" date="2015" name="BMC Genomics">
        <title>The completed genome sequence of the pathogenic ascomycete fungus Fusarium graminearum.</title>
        <authorList>
            <person name="King R."/>
            <person name="Urban M."/>
            <person name="Hammond-Kosack M.C.U."/>
            <person name="Hassani-Pak K."/>
            <person name="Hammond-Kosack K.E."/>
        </authorList>
    </citation>
    <scope>NUCLEOTIDE SEQUENCE [LARGE SCALE GENOMIC DNA]</scope>
    <source>
        <strain>ATCC MYA-4620 / CBS 123657 / FGSC 9075 / NRRL 31084 / PH-1</strain>
    </source>
</reference>
<comment type="function">
    <text evidence="1">Catalyzes the conversion of xanthine monophosphate (XMP) to GMP in the presence of glutamine and ATP through an adenyl-XMP intermediate.</text>
</comment>
<comment type="catalytic activity">
    <reaction evidence="1">
        <text>XMP + L-glutamine + ATP + H2O = GMP + L-glutamate + AMP + diphosphate + 2 H(+)</text>
        <dbReference type="Rhea" id="RHEA:11680"/>
        <dbReference type="ChEBI" id="CHEBI:15377"/>
        <dbReference type="ChEBI" id="CHEBI:15378"/>
        <dbReference type="ChEBI" id="CHEBI:29985"/>
        <dbReference type="ChEBI" id="CHEBI:30616"/>
        <dbReference type="ChEBI" id="CHEBI:33019"/>
        <dbReference type="ChEBI" id="CHEBI:57464"/>
        <dbReference type="ChEBI" id="CHEBI:58115"/>
        <dbReference type="ChEBI" id="CHEBI:58359"/>
        <dbReference type="ChEBI" id="CHEBI:456215"/>
        <dbReference type="EC" id="6.3.5.2"/>
    </reaction>
</comment>
<comment type="cofactor">
    <cofactor evidence="3">
        <name>Mg(2+)</name>
        <dbReference type="ChEBI" id="CHEBI:18420"/>
    </cofactor>
</comment>
<comment type="pathway">
    <text evidence="1">Purine metabolism; GMP biosynthesis; GMP from XMP (L-Gln route): step 1/1.</text>
</comment>
<comment type="subunit">
    <text evidence="3">Homodimer.</text>
</comment>
<comment type="subcellular location">
    <subcellularLocation>
        <location evidence="4">Cytoplasm</location>
        <location evidence="4">Cytosol</location>
    </subcellularLocation>
</comment>
<comment type="sequence caution" evidence="7">
    <conflict type="erroneous gene model prediction">
        <sequence resource="EMBL-CDS" id="ESU17065"/>
    </conflict>
</comment>
<sequence>MSDAFETAAPPHATYDTVLVLDMGSQTSHLILRRLRSLGVYSEMLPCTQKIKDLGWKPVGVILSGGPSSVYADDAPGVDPLVFELGVPVLGVCYGNQLIAWRANPKSVAPGVNREYGETQMAIHKIGTHGDRLFEGLGDSLNVVMSHFDKVVQLPDGFQTIATTKNSEFAGIAHETQPIFGIQFHPEISHTEKGTDIIANFATKICGARPDWKMDDFSAREIKRIRELVGDKAQVIGAVSGGVDSTVAAKLMKEAIGDRFHAILVDQGLMRLNECEQVKETLDKHLGINLTVVDGSELFLGRLAGVTEPEAKRKIIGGTFIDLFEIEALRIEKEAENTDRAGKVEWFLQGTLYADIVESLSFKGAASSTIKSHHNAGGLPARMQNGEAQLKLLEPLRELFKDEVRAFGRQLGIHEELIGRHPFPGPGLGIRIIGEVTPERVEIVRKADHIFISMIREAGIYDEVTQAYAALDSSRAVGVQGDARVYGYICILRAVTSLDMMSAEPYEFTWSLMKAISRRIVNEVDGIARVVYDTTSKPPGTIELE</sequence>
<accession>Q4HXF0</accession>
<accession>A0A0E0RWY4</accession>
<accession>A0A1C3YJM8</accession>
<accession>I1S0W7</accession>
<organism>
    <name type="scientific">Gibberella zeae (strain ATCC MYA-4620 / CBS 123657 / FGSC 9075 / NRRL 31084 / PH-1)</name>
    <name type="common">Wheat head blight fungus</name>
    <name type="synonym">Fusarium graminearum</name>
    <dbReference type="NCBI Taxonomy" id="229533"/>
    <lineage>
        <taxon>Eukaryota</taxon>
        <taxon>Fungi</taxon>
        <taxon>Dikarya</taxon>
        <taxon>Ascomycota</taxon>
        <taxon>Pezizomycotina</taxon>
        <taxon>Sordariomycetes</taxon>
        <taxon>Hypocreomycetidae</taxon>
        <taxon>Hypocreales</taxon>
        <taxon>Nectriaceae</taxon>
        <taxon>Fusarium</taxon>
    </lineage>
</organism>
<name>GUAA_GIBZE</name>
<evidence type="ECO:0000250" key="1">
    <source>
        <dbReference type="UniProtKB" id="P38625"/>
    </source>
</evidence>
<evidence type="ECO:0000250" key="2">
    <source>
        <dbReference type="UniProtKB" id="P49915"/>
    </source>
</evidence>
<evidence type="ECO:0000250" key="3">
    <source>
        <dbReference type="UniProtKB" id="Q4WFT3"/>
    </source>
</evidence>
<evidence type="ECO:0000250" key="4">
    <source>
        <dbReference type="UniProtKB" id="Q9P772"/>
    </source>
</evidence>
<evidence type="ECO:0000255" key="5">
    <source>
        <dbReference type="PROSITE-ProRule" id="PRU00605"/>
    </source>
</evidence>
<evidence type="ECO:0000255" key="6">
    <source>
        <dbReference type="PROSITE-ProRule" id="PRU00886"/>
    </source>
</evidence>
<evidence type="ECO:0000305" key="7"/>
<keyword id="KW-0067">ATP-binding</keyword>
<keyword id="KW-0963">Cytoplasm</keyword>
<keyword id="KW-0315">Glutamine amidotransferase</keyword>
<keyword id="KW-0332">GMP biosynthesis</keyword>
<keyword id="KW-0436">Ligase</keyword>
<keyword id="KW-0460">Magnesium</keyword>
<keyword id="KW-0547">Nucleotide-binding</keyword>
<keyword id="KW-0658">Purine biosynthesis</keyword>
<keyword id="KW-1185">Reference proteome</keyword>